<geneLocation type="chloroplast"/>
<dbReference type="EMBL" id="AP006715">
    <property type="protein sequence ID" value="BAE92327.1"/>
    <property type="molecule type" value="Genomic_DNA"/>
</dbReference>
<dbReference type="RefSeq" id="YP_536884.1">
    <property type="nucleotide sequence ID" value="NC_007932.1"/>
</dbReference>
<dbReference type="SMR" id="Q1XDT4"/>
<dbReference type="GO" id="GO:0009507">
    <property type="term" value="C:chloroplast"/>
    <property type="evidence" value="ECO:0007669"/>
    <property type="project" value="UniProtKB-SubCell"/>
</dbReference>
<dbReference type="InterPro" id="IPR017077">
    <property type="entry name" value="Uncharacterised_Ycf55_algae"/>
</dbReference>
<dbReference type="InterPro" id="IPR022552">
    <property type="entry name" value="UPF_Ycf55"/>
</dbReference>
<dbReference type="Pfam" id="PF12452">
    <property type="entry name" value="DUF3685"/>
    <property type="match status" value="1"/>
</dbReference>
<dbReference type="PIRSF" id="PIRSF036962">
    <property type="entry name" value="UCP036962_SignTr_Ycf55"/>
    <property type="match status" value="1"/>
</dbReference>
<reference key="1">
    <citation type="submission" date="2003-11" db="EMBL/GenBank/DDBJ databases">
        <title>Whole genome sequence of Porphyra yezoensis chloroplast.</title>
        <authorList>
            <person name="Kunimoto M."/>
            <person name="Morishima K."/>
            <person name="Yoshikawa M."/>
            <person name="Fukuda S."/>
            <person name="Kobayashi T."/>
            <person name="Kobayashi M."/>
            <person name="Okazaki T."/>
            <person name="Ohara I."/>
            <person name="Nakayama I."/>
        </authorList>
    </citation>
    <scope>NUCLEOTIDE SEQUENCE [LARGE SCALE GENOMIC DNA]</scope>
    <source>
        <strain>U-51</strain>
    </source>
</reference>
<proteinExistence type="inferred from homology"/>
<comment type="subcellular location">
    <subcellularLocation>
        <location>Plastid</location>
        <location>Chloroplast</location>
    </subcellularLocation>
</comment>
<comment type="similarity">
    <text evidence="1">Belongs to the ycf55 family.</text>
</comment>
<keyword id="KW-0150">Chloroplast</keyword>
<keyword id="KW-0934">Plastid</keyword>
<feature type="chain" id="PRO_0000277356" description="Uncharacterized protein ycf55">
    <location>
        <begin position="1"/>
        <end position="320"/>
    </location>
</feature>
<accession>Q1XDT4</accession>
<gene>
    <name type="primary">ycf55</name>
</gene>
<name>YCF55_PYRYE</name>
<organism>
    <name type="scientific">Pyropia yezoensis</name>
    <name type="common">Susabi-nori</name>
    <name type="synonym">Porphyra yezoensis</name>
    <dbReference type="NCBI Taxonomy" id="2788"/>
    <lineage>
        <taxon>Eukaryota</taxon>
        <taxon>Rhodophyta</taxon>
        <taxon>Bangiophyceae</taxon>
        <taxon>Bangiales</taxon>
        <taxon>Bangiaceae</taxon>
        <taxon>Pyropia</taxon>
    </lineage>
</organism>
<sequence>MNNYWPSSQGPTLNQEVAELLVRTSIKINKRLTNCSQEVLILDVFRTEVKRNLLKIILAELEKILLEIYNSNLDVNDITNLTENILIDLFHRCIKRFCKLYELDCIDIYQDIHDLNYLLNDYKMLLQILIIQLLFGSSQTVNKTFNLFTYNMPVKQVEIFLENYLIQLSNIIAHMLVQNFNTVNETNASYLCNVKFLSDRKLEKLKNNLIWNTIIKNYLERPRAIYESRYKVWGFYQEGLNCQYIYACRSNELQMLSPMQIIITFLLEVQDFFVPKIKSTIFLIGQIIIYAGQNLLNQIMRTSLEILRRSSNFKKQSNSL</sequence>
<evidence type="ECO:0000305" key="1"/>
<protein>
    <recommendedName>
        <fullName>Uncharacterized protein ycf55</fullName>
    </recommendedName>
</protein>